<evidence type="ECO:0000255" key="1">
    <source>
        <dbReference type="HAMAP-Rule" id="MF_01306"/>
    </source>
</evidence>
<evidence type="ECO:0000305" key="2"/>
<protein>
    <recommendedName>
        <fullName evidence="1">Small ribosomal subunit protein uS4B</fullName>
    </recommendedName>
    <alternativeName>
        <fullName evidence="2">30S ribosomal protein S4 2</fullName>
    </alternativeName>
</protein>
<organism>
    <name type="scientific">Alkaliphilus metalliredigens (strain QYMF)</name>
    <dbReference type="NCBI Taxonomy" id="293826"/>
    <lineage>
        <taxon>Bacteria</taxon>
        <taxon>Bacillati</taxon>
        <taxon>Bacillota</taxon>
        <taxon>Clostridia</taxon>
        <taxon>Peptostreptococcales</taxon>
        <taxon>Natronincolaceae</taxon>
        <taxon>Alkaliphilus</taxon>
    </lineage>
</organism>
<sequence length="199" mass="23069">MARMRQPRFKTCRRLGINVCGHPKAMKRADNGQVRDKRKLSSYGIQLLEKQRLRAYYEVMEKQFKIYVKAAIKDSETTGNSLIKKLECRLDNLVYRTGFGSSIRQARQMVVHGHILVNGKKVDRPSFAVSVGDDISLREKSRKNKIFIDNFLRNVDFSYPYIAKNEAGFSGQLIRMPERHEAPIEVNDHLVVEFYSKTI</sequence>
<proteinExistence type="inferred from homology"/>
<comment type="function">
    <text evidence="1">One of the primary rRNA binding proteins, it binds directly to 16S rRNA where it nucleates assembly of the body of the 30S subunit.</text>
</comment>
<comment type="function">
    <text evidence="1">With S5 and S12 plays an important role in translational accuracy.</text>
</comment>
<comment type="subunit">
    <text evidence="1">Part of the 30S ribosomal subunit. Contacts protein S5. The interaction surface between S4 and S5 is involved in control of translational fidelity.</text>
</comment>
<comment type="similarity">
    <text evidence="1">Belongs to the universal ribosomal protein uS4 family.</text>
</comment>
<accession>A6TSI5</accession>
<name>RS4B_ALKMQ</name>
<dbReference type="EMBL" id="CP000724">
    <property type="protein sequence ID" value="ABR49153.1"/>
    <property type="molecule type" value="Genomic_DNA"/>
</dbReference>
<dbReference type="RefSeq" id="WP_012064120.1">
    <property type="nucleotide sequence ID" value="NC_009633.1"/>
</dbReference>
<dbReference type="SMR" id="A6TSI5"/>
<dbReference type="STRING" id="293826.Amet_3013"/>
<dbReference type="KEGG" id="amt:Amet_3013"/>
<dbReference type="eggNOG" id="COG0522">
    <property type="taxonomic scope" value="Bacteria"/>
</dbReference>
<dbReference type="HOGENOM" id="CLU_092403_0_1_9"/>
<dbReference type="OrthoDB" id="9803672at2"/>
<dbReference type="Proteomes" id="UP000001572">
    <property type="component" value="Chromosome"/>
</dbReference>
<dbReference type="GO" id="GO:0015935">
    <property type="term" value="C:small ribosomal subunit"/>
    <property type="evidence" value="ECO:0007669"/>
    <property type="project" value="InterPro"/>
</dbReference>
<dbReference type="GO" id="GO:0019843">
    <property type="term" value="F:rRNA binding"/>
    <property type="evidence" value="ECO:0007669"/>
    <property type="project" value="UniProtKB-UniRule"/>
</dbReference>
<dbReference type="GO" id="GO:0003735">
    <property type="term" value="F:structural constituent of ribosome"/>
    <property type="evidence" value="ECO:0007669"/>
    <property type="project" value="InterPro"/>
</dbReference>
<dbReference type="GO" id="GO:0042274">
    <property type="term" value="P:ribosomal small subunit biogenesis"/>
    <property type="evidence" value="ECO:0007669"/>
    <property type="project" value="TreeGrafter"/>
</dbReference>
<dbReference type="GO" id="GO:0006412">
    <property type="term" value="P:translation"/>
    <property type="evidence" value="ECO:0007669"/>
    <property type="project" value="UniProtKB-UniRule"/>
</dbReference>
<dbReference type="CDD" id="cd00165">
    <property type="entry name" value="S4"/>
    <property type="match status" value="1"/>
</dbReference>
<dbReference type="FunFam" id="3.10.290.10:FF:000001">
    <property type="entry name" value="30S ribosomal protein S4"/>
    <property type="match status" value="1"/>
</dbReference>
<dbReference type="Gene3D" id="1.10.1050.10">
    <property type="entry name" value="Ribosomal Protein S4 Delta 41, Chain A, domain 1"/>
    <property type="match status" value="1"/>
</dbReference>
<dbReference type="Gene3D" id="3.10.290.10">
    <property type="entry name" value="RNA-binding S4 domain"/>
    <property type="match status" value="1"/>
</dbReference>
<dbReference type="HAMAP" id="MF_01306_B">
    <property type="entry name" value="Ribosomal_uS4_B"/>
    <property type="match status" value="1"/>
</dbReference>
<dbReference type="InterPro" id="IPR022801">
    <property type="entry name" value="Ribosomal_uS4"/>
</dbReference>
<dbReference type="InterPro" id="IPR005709">
    <property type="entry name" value="Ribosomal_uS4_bac-type"/>
</dbReference>
<dbReference type="InterPro" id="IPR018079">
    <property type="entry name" value="Ribosomal_uS4_CS"/>
</dbReference>
<dbReference type="InterPro" id="IPR001912">
    <property type="entry name" value="Ribosomal_uS4_N"/>
</dbReference>
<dbReference type="InterPro" id="IPR002942">
    <property type="entry name" value="S4_RNA-bd"/>
</dbReference>
<dbReference type="InterPro" id="IPR036986">
    <property type="entry name" value="S4_RNA-bd_sf"/>
</dbReference>
<dbReference type="NCBIfam" id="NF003717">
    <property type="entry name" value="PRK05327.1"/>
    <property type="match status" value="1"/>
</dbReference>
<dbReference type="NCBIfam" id="TIGR01017">
    <property type="entry name" value="rpsD_bact"/>
    <property type="match status" value="1"/>
</dbReference>
<dbReference type="PANTHER" id="PTHR11831">
    <property type="entry name" value="30S 40S RIBOSOMAL PROTEIN"/>
    <property type="match status" value="1"/>
</dbReference>
<dbReference type="PANTHER" id="PTHR11831:SF4">
    <property type="entry name" value="SMALL RIBOSOMAL SUBUNIT PROTEIN US4M"/>
    <property type="match status" value="1"/>
</dbReference>
<dbReference type="Pfam" id="PF00163">
    <property type="entry name" value="Ribosomal_S4"/>
    <property type="match status" value="1"/>
</dbReference>
<dbReference type="Pfam" id="PF01479">
    <property type="entry name" value="S4"/>
    <property type="match status" value="1"/>
</dbReference>
<dbReference type="SMART" id="SM01390">
    <property type="entry name" value="Ribosomal_S4"/>
    <property type="match status" value="1"/>
</dbReference>
<dbReference type="SMART" id="SM00363">
    <property type="entry name" value="S4"/>
    <property type="match status" value="1"/>
</dbReference>
<dbReference type="SUPFAM" id="SSF55174">
    <property type="entry name" value="Alpha-L RNA-binding motif"/>
    <property type="match status" value="1"/>
</dbReference>
<dbReference type="PROSITE" id="PS00632">
    <property type="entry name" value="RIBOSOMAL_S4"/>
    <property type="match status" value="1"/>
</dbReference>
<dbReference type="PROSITE" id="PS50889">
    <property type="entry name" value="S4"/>
    <property type="match status" value="1"/>
</dbReference>
<reference key="1">
    <citation type="journal article" date="2016" name="Genome Announc.">
        <title>Complete genome sequence of Alkaliphilus metalliredigens strain QYMF, an alkaliphilic and metal-reducing bacterium isolated from borax-contaminated leachate ponds.</title>
        <authorList>
            <person name="Hwang C."/>
            <person name="Copeland A."/>
            <person name="Lucas S."/>
            <person name="Lapidus A."/>
            <person name="Barry K."/>
            <person name="Detter J.C."/>
            <person name="Glavina Del Rio T."/>
            <person name="Hammon N."/>
            <person name="Israni S."/>
            <person name="Dalin E."/>
            <person name="Tice H."/>
            <person name="Pitluck S."/>
            <person name="Chertkov O."/>
            <person name="Brettin T."/>
            <person name="Bruce D."/>
            <person name="Han C."/>
            <person name="Schmutz J."/>
            <person name="Larimer F."/>
            <person name="Land M.L."/>
            <person name="Hauser L."/>
            <person name="Kyrpides N."/>
            <person name="Mikhailova N."/>
            <person name="Ye Q."/>
            <person name="Zhou J."/>
            <person name="Richardson P."/>
            <person name="Fields M.W."/>
        </authorList>
    </citation>
    <scope>NUCLEOTIDE SEQUENCE [LARGE SCALE GENOMIC DNA]</scope>
    <source>
        <strain>QYMF</strain>
    </source>
</reference>
<gene>
    <name evidence="1" type="primary">rpsD2</name>
    <name type="ordered locus">Amet_3013</name>
</gene>
<feature type="chain" id="PRO_0000322260" description="Small ribosomal subunit protein uS4B">
    <location>
        <begin position="1"/>
        <end position="199"/>
    </location>
</feature>
<feature type="domain" description="S4 RNA-binding" evidence="1">
    <location>
        <begin position="88"/>
        <end position="151"/>
    </location>
</feature>
<keyword id="KW-1185">Reference proteome</keyword>
<keyword id="KW-0687">Ribonucleoprotein</keyword>
<keyword id="KW-0689">Ribosomal protein</keyword>
<keyword id="KW-0694">RNA-binding</keyword>
<keyword id="KW-0699">rRNA-binding</keyword>